<evidence type="ECO:0000255" key="1">
    <source>
        <dbReference type="HAMAP-Rule" id="MF_00160"/>
    </source>
</evidence>
<gene>
    <name evidence="1" type="primary">serC</name>
    <name type="ordered locus">llmg_0565</name>
</gene>
<keyword id="KW-0028">Amino-acid biosynthesis</keyword>
<keyword id="KW-0032">Aminotransferase</keyword>
<keyword id="KW-0963">Cytoplasm</keyword>
<keyword id="KW-0663">Pyridoxal phosphate</keyword>
<keyword id="KW-0718">Serine biosynthesis</keyword>
<keyword id="KW-0808">Transferase</keyword>
<comment type="function">
    <text evidence="1">Catalyzes the reversible conversion of 3-phosphohydroxypyruvate to phosphoserine and of 3-hydroxy-2-oxo-4-phosphonooxybutanoate to phosphohydroxythreonine.</text>
</comment>
<comment type="catalytic activity">
    <reaction evidence="1">
        <text>O-phospho-L-serine + 2-oxoglutarate = 3-phosphooxypyruvate + L-glutamate</text>
        <dbReference type="Rhea" id="RHEA:14329"/>
        <dbReference type="ChEBI" id="CHEBI:16810"/>
        <dbReference type="ChEBI" id="CHEBI:18110"/>
        <dbReference type="ChEBI" id="CHEBI:29985"/>
        <dbReference type="ChEBI" id="CHEBI:57524"/>
        <dbReference type="EC" id="2.6.1.52"/>
    </reaction>
</comment>
<comment type="catalytic activity">
    <reaction evidence="1">
        <text>4-(phosphooxy)-L-threonine + 2-oxoglutarate = (R)-3-hydroxy-2-oxo-4-phosphooxybutanoate + L-glutamate</text>
        <dbReference type="Rhea" id="RHEA:16573"/>
        <dbReference type="ChEBI" id="CHEBI:16810"/>
        <dbReference type="ChEBI" id="CHEBI:29985"/>
        <dbReference type="ChEBI" id="CHEBI:58452"/>
        <dbReference type="ChEBI" id="CHEBI:58538"/>
        <dbReference type="EC" id="2.6.1.52"/>
    </reaction>
</comment>
<comment type="cofactor">
    <cofactor evidence="1">
        <name>pyridoxal 5'-phosphate</name>
        <dbReference type="ChEBI" id="CHEBI:597326"/>
    </cofactor>
    <text evidence="1">Binds 1 pyridoxal phosphate per subunit.</text>
</comment>
<comment type="pathway">
    <text evidence="1">Amino-acid biosynthesis; L-serine biosynthesis; L-serine from 3-phospho-D-glycerate: step 2/3.</text>
</comment>
<comment type="subunit">
    <text evidence="1">Homodimer.</text>
</comment>
<comment type="subcellular location">
    <subcellularLocation>
        <location evidence="1">Cytoplasm</location>
    </subcellularLocation>
</comment>
<comment type="similarity">
    <text evidence="1">Belongs to the class-V pyridoxal-phosphate-dependent aminotransferase family. SerC subfamily.</text>
</comment>
<feature type="chain" id="PRO_1000058213" description="Phosphoserine aminotransferase">
    <location>
        <begin position="1"/>
        <end position="365"/>
    </location>
</feature>
<feature type="binding site" evidence="1">
    <location>
        <position position="40"/>
    </location>
    <ligand>
        <name>L-glutamate</name>
        <dbReference type="ChEBI" id="CHEBI:29985"/>
    </ligand>
</feature>
<feature type="binding site" evidence="1">
    <location>
        <begin position="74"/>
        <end position="75"/>
    </location>
    <ligand>
        <name>pyridoxal 5'-phosphate</name>
        <dbReference type="ChEBI" id="CHEBI:597326"/>
    </ligand>
</feature>
<feature type="binding site" evidence="1">
    <location>
        <position position="99"/>
    </location>
    <ligand>
        <name>pyridoxal 5'-phosphate</name>
        <dbReference type="ChEBI" id="CHEBI:597326"/>
    </ligand>
</feature>
<feature type="binding site" evidence="1">
    <location>
        <position position="155"/>
    </location>
    <ligand>
        <name>pyridoxal 5'-phosphate</name>
        <dbReference type="ChEBI" id="CHEBI:597326"/>
    </ligand>
</feature>
<feature type="binding site" evidence="1">
    <location>
        <position position="177"/>
    </location>
    <ligand>
        <name>pyridoxal 5'-phosphate</name>
        <dbReference type="ChEBI" id="CHEBI:597326"/>
    </ligand>
</feature>
<feature type="binding site" evidence="1">
    <location>
        <position position="200"/>
    </location>
    <ligand>
        <name>pyridoxal 5'-phosphate</name>
        <dbReference type="ChEBI" id="CHEBI:597326"/>
    </ligand>
</feature>
<feature type="binding site" evidence="1">
    <location>
        <begin position="241"/>
        <end position="242"/>
    </location>
    <ligand>
        <name>pyridoxal 5'-phosphate</name>
        <dbReference type="ChEBI" id="CHEBI:597326"/>
    </ligand>
</feature>
<feature type="modified residue" description="N6-(pyridoxal phosphate)lysine" evidence="1">
    <location>
        <position position="201"/>
    </location>
</feature>
<proteinExistence type="inferred from homology"/>
<organism>
    <name type="scientific">Lactococcus lactis subsp. cremoris (strain MG1363)</name>
    <dbReference type="NCBI Taxonomy" id="416870"/>
    <lineage>
        <taxon>Bacteria</taxon>
        <taxon>Bacillati</taxon>
        <taxon>Bacillota</taxon>
        <taxon>Bacilli</taxon>
        <taxon>Lactobacillales</taxon>
        <taxon>Streptococcaceae</taxon>
        <taxon>Lactococcus</taxon>
        <taxon>Lactococcus cremoris subsp. cremoris</taxon>
    </lineage>
</organism>
<sequence length="365" mass="40849">MIYNFGAGPSVLPKEVLKKVQEELLDFEKSGMSVMEISHRSKSFQEVIDEAQNNLRDLMSIPQNYKILFLQGGASTQFSMIPMNLALGKKAYYAISGAFGKKAYDEAVKLSQTLDFEAISLGSTQSEYYNHLLKIDTSKVDEKMAAYLHITTNNTIEGTTIFPENLPEVNSVPLIADMSSNILAVDYDVSKFGLIYAGAQKNLGIAGLTIVIIREDLLNQKESLSSMMDYRILAQNGSMYNTPPTFAIYLAGLVFKWVKEQGGVKKLEAINHQKARMLYDLIDQSDFYQSPVLNKVERSICNVVFTSPSKELDALFVQKAEEKGFKSIKGHRSVGGMRASIYNAFPIEGVLELVKFMKKFEEENK</sequence>
<dbReference type="EC" id="2.6.1.52" evidence="1"/>
<dbReference type="EMBL" id="AM406671">
    <property type="protein sequence ID" value="CAL97167.1"/>
    <property type="molecule type" value="Genomic_DNA"/>
</dbReference>
<dbReference type="RefSeq" id="WP_011834591.1">
    <property type="nucleotide sequence ID" value="NC_009004.1"/>
</dbReference>
<dbReference type="SMR" id="A2RIS2"/>
<dbReference type="STRING" id="416870.llmg_0565"/>
<dbReference type="KEGG" id="llm:llmg_0565"/>
<dbReference type="eggNOG" id="COG1932">
    <property type="taxonomic scope" value="Bacteria"/>
</dbReference>
<dbReference type="HOGENOM" id="CLU_034866_0_2_9"/>
<dbReference type="OrthoDB" id="9809412at2"/>
<dbReference type="PhylomeDB" id="A2RIS2"/>
<dbReference type="UniPathway" id="UPA00135">
    <property type="reaction ID" value="UER00197"/>
</dbReference>
<dbReference type="Proteomes" id="UP000000364">
    <property type="component" value="Chromosome"/>
</dbReference>
<dbReference type="GO" id="GO:0005737">
    <property type="term" value="C:cytoplasm"/>
    <property type="evidence" value="ECO:0007669"/>
    <property type="project" value="UniProtKB-SubCell"/>
</dbReference>
<dbReference type="GO" id="GO:0004648">
    <property type="term" value="F:O-phospho-L-serine:2-oxoglutarate aminotransferase activity"/>
    <property type="evidence" value="ECO:0007669"/>
    <property type="project" value="UniProtKB-UniRule"/>
</dbReference>
<dbReference type="GO" id="GO:0030170">
    <property type="term" value="F:pyridoxal phosphate binding"/>
    <property type="evidence" value="ECO:0007669"/>
    <property type="project" value="UniProtKB-UniRule"/>
</dbReference>
<dbReference type="GO" id="GO:0006564">
    <property type="term" value="P:L-serine biosynthetic process"/>
    <property type="evidence" value="ECO:0007669"/>
    <property type="project" value="UniProtKB-UniRule"/>
</dbReference>
<dbReference type="FunFam" id="3.40.640.10:FF:000010">
    <property type="entry name" value="Phosphoserine aminotransferase"/>
    <property type="match status" value="1"/>
</dbReference>
<dbReference type="FunFam" id="3.90.1150.10:FF:000006">
    <property type="entry name" value="Phosphoserine aminotransferase"/>
    <property type="match status" value="1"/>
</dbReference>
<dbReference type="Gene3D" id="3.90.1150.10">
    <property type="entry name" value="Aspartate Aminotransferase, domain 1"/>
    <property type="match status" value="1"/>
</dbReference>
<dbReference type="Gene3D" id="3.40.640.10">
    <property type="entry name" value="Type I PLP-dependent aspartate aminotransferase-like (Major domain)"/>
    <property type="match status" value="1"/>
</dbReference>
<dbReference type="HAMAP" id="MF_00160">
    <property type="entry name" value="SerC_aminotrans_5"/>
    <property type="match status" value="1"/>
</dbReference>
<dbReference type="InterPro" id="IPR000192">
    <property type="entry name" value="Aminotrans_V_dom"/>
</dbReference>
<dbReference type="InterPro" id="IPR020578">
    <property type="entry name" value="Aminotrans_V_PyrdxlP_BS"/>
</dbReference>
<dbReference type="InterPro" id="IPR022278">
    <property type="entry name" value="Pser_aminoTfrase"/>
</dbReference>
<dbReference type="InterPro" id="IPR015424">
    <property type="entry name" value="PyrdxlP-dep_Trfase"/>
</dbReference>
<dbReference type="InterPro" id="IPR015421">
    <property type="entry name" value="PyrdxlP-dep_Trfase_major"/>
</dbReference>
<dbReference type="InterPro" id="IPR015422">
    <property type="entry name" value="PyrdxlP-dep_Trfase_small"/>
</dbReference>
<dbReference type="NCBIfam" id="NF003764">
    <property type="entry name" value="PRK05355.1"/>
    <property type="match status" value="1"/>
</dbReference>
<dbReference type="NCBIfam" id="TIGR01364">
    <property type="entry name" value="serC_1"/>
    <property type="match status" value="1"/>
</dbReference>
<dbReference type="PANTHER" id="PTHR43247">
    <property type="entry name" value="PHOSPHOSERINE AMINOTRANSFERASE"/>
    <property type="match status" value="1"/>
</dbReference>
<dbReference type="PANTHER" id="PTHR43247:SF1">
    <property type="entry name" value="PHOSPHOSERINE AMINOTRANSFERASE"/>
    <property type="match status" value="1"/>
</dbReference>
<dbReference type="Pfam" id="PF00266">
    <property type="entry name" value="Aminotran_5"/>
    <property type="match status" value="1"/>
</dbReference>
<dbReference type="PIRSF" id="PIRSF000525">
    <property type="entry name" value="SerC"/>
    <property type="match status" value="1"/>
</dbReference>
<dbReference type="SUPFAM" id="SSF53383">
    <property type="entry name" value="PLP-dependent transferases"/>
    <property type="match status" value="1"/>
</dbReference>
<dbReference type="PROSITE" id="PS00595">
    <property type="entry name" value="AA_TRANSFER_CLASS_5"/>
    <property type="match status" value="1"/>
</dbReference>
<reference key="1">
    <citation type="journal article" date="2007" name="J. Bacteriol.">
        <title>The complete genome sequence of the lactic acid bacterial paradigm Lactococcus lactis subsp. cremoris MG1363.</title>
        <authorList>
            <person name="Wegmann U."/>
            <person name="O'Connell-Motherway M."/>
            <person name="Zomer A."/>
            <person name="Buist G."/>
            <person name="Shearman C."/>
            <person name="Canchaya C."/>
            <person name="Ventura M."/>
            <person name="Goesmann A."/>
            <person name="Gasson M.J."/>
            <person name="Kuipers O.P."/>
            <person name="van Sinderen D."/>
            <person name="Kok J."/>
        </authorList>
    </citation>
    <scope>NUCLEOTIDE SEQUENCE [LARGE SCALE GENOMIC DNA]</scope>
    <source>
        <strain>MG1363</strain>
    </source>
</reference>
<protein>
    <recommendedName>
        <fullName evidence="1">Phosphoserine aminotransferase</fullName>
        <ecNumber evidence="1">2.6.1.52</ecNumber>
    </recommendedName>
    <alternativeName>
        <fullName evidence="1">Phosphohydroxythreonine aminotransferase</fullName>
        <shortName evidence="1">PSAT</shortName>
    </alternativeName>
</protein>
<accession>A2RIS2</accession>
<name>SERC_LACLM</name>